<name>TPIS_GEOMG</name>
<sequence length="251" mass="27116">MRTPIIAGNWKLFKKSSEAQDFVAELIPLVQKTTDVEIVIAPVFTVLSAVKRAIADCNIMLSAQDCFWEEEGAFTGEISPGMLVDAGCSHVIIGHSERRQYFGETDETVNRKIKAAITAGLTVLFCIGETLAEREADKTFEVLRTQIENGLAGLARGDLAKIVIAYEPVWAIGTGKTATDEQAQIAHAFIRKVVGELFTVQIAETIRILYGGSVKPENVRGLMNQPDIDGALVGGASLKADSFGAIVNYKA</sequence>
<comment type="function">
    <text evidence="1">Involved in the gluconeogenesis. Catalyzes stereospecifically the conversion of dihydroxyacetone phosphate (DHAP) to D-glyceraldehyde-3-phosphate (G3P).</text>
</comment>
<comment type="catalytic activity">
    <reaction evidence="1">
        <text>D-glyceraldehyde 3-phosphate = dihydroxyacetone phosphate</text>
        <dbReference type="Rhea" id="RHEA:18585"/>
        <dbReference type="ChEBI" id="CHEBI:57642"/>
        <dbReference type="ChEBI" id="CHEBI:59776"/>
        <dbReference type="EC" id="5.3.1.1"/>
    </reaction>
</comment>
<comment type="pathway">
    <text evidence="1">Carbohydrate biosynthesis; gluconeogenesis.</text>
</comment>
<comment type="pathway">
    <text evidence="1">Carbohydrate degradation; glycolysis; D-glyceraldehyde 3-phosphate from glycerone phosphate: step 1/1.</text>
</comment>
<comment type="subunit">
    <text evidence="1">Homodimer.</text>
</comment>
<comment type="subcellular location">
    <subcellularLocation>
        <location evidence="1">Cytoplasm</location>
    </subcellularLocation>
</comment>
<comment type="similarity">
    <text evidence="1">Belongs to the triosephosphate isomerase family.</text>
</comment>
<protein>
    <recommendedName>
        <fullName evidence="1">Triosephosphate isomerase</fullName>
        <shortName evidence="1">TIM</shortName>
        <shortName evidence="1">TPI</shortName>
        <ecNumber evidence="1">5.3.1.1</ecNumber>
    </recommendedName>
    <alternativeName>
        <fullName evidence="1">Triose-phosphate isomerase</fullName>
    </alternativeName>
</protein>
<gene>
    <name evidence="1" type="primary">tpiA</name>
    <name type="ordered locus">Gmet_1948</name>
</gene>
<organism>
    <name type="scientific">Geobacter metallireducens (strain ATCC 53774 / DSM 7210 / GS-15)</name>
    <dbReference type="NCBI Taxonomy" id="269799"/>
    <lineage>
        <taxon>Bacteria</taxon>
        <taxon>Pseudomonadati</taxon>
        <taxon>Thermodesulfobacteriota</taxon>
        <taxon>Desulfuromonadia</taxon>
        <taxon>Geobacterales</taxon>
        <taxon>Geobacteraceae</taxon>
        <taxon>Geobacter</taxon>
    </lineage>
</organism>
<dbReference type="EC" id="5.3.1.1" evidence="1"/>
<dbReference type="EMBL" id="CP000148">
    <property type="protein sequence ID" value="ABB32177.1"/>
    <property type="molecule type" value="Genomic_DNA"/>
</dbReference>
<dbReference type="RefSeq" id="WP_011365891.1">
    <property type="nucleotide sequence ID" value="NC_007517.1"/>
</dbReference>
<dbReference type="SMR" id="Q39U97"/>
<dbReference type="STRING" id="269799.Gmet_1948"/>
<dbReference type="KEGG" id="gme:Gmet_1948"/>
<dbReference type="eggNOG" id="COG0149">
    <property type="taxonomic scope" value="Bacteria"/>
</dbReference>
<dbReference type="HOGENOM" id="CLU_024251_2_3_7"/>
<dbReference type="UniPathway" id="UPA00109">
    <property type="reaction ID" value="UER00189"/>
</dbReference>
<dbReference type="UniPathway" id="UPA00138"/>
<dbReference type="Proteomes" id="UP000007073">
    <property type="component" value="Chromosome"/>
</dbReference>
<dbReference type="GO" id="GO:0005829">
    <property type="term" value="C:cytosol"/>
    <property type="evidence" value="ECO:0007669"/>
    <property type="project" value="TreeGrafter"/>
</dbReference>
<dbReference type="GO" id="GO:0004807">
    <property type="term" value="F:triose-phosphate isomerase activity"/>
    <property type="evidence" value="ECO:0007669"/>
    <property type="project" value="UniProtKB-UniRule"/>
</dbReference>
<dbReference type="GO" id="GO:0006094">
    <property type="term" value="P:gluconeogenesis"/>
    <property type="evidence" value="ECO:0007669"/>
    <property type="project" value="UniProtKB-UniRule"/>
</dbReference>
<dbReference type="GO" id="GO:0046166">
    <property type="term" value="P:glyceraldehyde-3-phosphate biosynthetic process"/>
    <property type="evidence" value="ECO:0007669"/>
    <property type="project" value="TreeGrafter"/>
</dbReference>
<dbReference type="GO" id="GO:0019563">
    <property type="term" value="P:glycerol catabolic process"/>
    <property type="evidence" value="ECO:0007669"/>
    <property type="project" value="TreeGrafter"/>
</dbReference>
<dbReference type="GO" id="GO:0006096">
    <property type="term" value="P:glycolytic process"/>
    <property type="evidence" value="ECO:0007669"/>
    <property type="project" value="UniProtKB-UniRule"/>
</dbReference>
<dbReference type="CDD" id="cd00311">
    <property type="entry name" value="TIM"/>
    <property type="match status" value="1"/>
</dbReference>
<dbReference type="FunFam" id="3.20.20.70:FF:000020">
    <property type="entry name" value="Triosephosphate isomerase"/>
    <property type="match status" value="1"/>
</dbReference>
<dbReference type="Gene3D" id="3.20.20.70">
    <property type="entry name" value="Aldolase class I"/>
    <property type="match status" value="1"/>
</dbReference>
<dbReference type="HAMAP" id="MF_00147_B">
    <property type="entry name" value="TIM_B"/>
    <property type="match status" value="1"/>
</dbReference>
<dbReference type="InterPro" id="IPR013785">
    <property type="entry name" value="Aldolase_TIM"/>
</dbReference>
<dbReference type="InterPro" id="IPR035990">
    <property type="entry name" value="TIM_sf"/>
</dbReference>
<dbReference type="InterPro" id="IPR022896">
    <property type="entry name" value="TrioseP_Isoase_bac/euk"/>
</dbReference>
<dbReference type="InterPro" id="IPR000652">
    <property type="entry name" value="Triosephosphate_isomerase"/>
</dbReference>
<dbReference type="InterPro" id="IPR020861">
    <property type="entry name" value="Triosephosphate_isomerase_AS"/>
</dbReference>
<dbReference type="NCBIfam" id="TIGR00419">
    <property type="entry name" value="tim"/>
    <property type="match status" value="1"/>
</dbReference>
<dbReference type="PANTHER" id="PTHR21139">
    <property type="entry name" value="TRIOSEPHOSPHATE ISOMERASE"/>
    <property type="match status" value="1"/>
</dbReference>
<dbReference type="PANTHER" id="PTHR21139:SF42">
    <property type="entry name" value="TRIOSEPHOSPHATE ISOMERASE"/>
    <property type="match status" value="1"/>
</dbReference>
<dbReference type="Pfam" id="PF00121">
    <property type="entry name" value="TIM"/>
    <property type="match status" value="1"/>
</dbReference>
<dbReference type="SUPFAM" id="SSF51351">
    <property type="entry name" value="Triosephosphate isomerase (TIM)"/>
    <property type="match status" value="1"/>
</dbReference>
<dbReference type="PROSITE" id="PS00171">
    <property type="entry name" value="TIM_1"/>
    <property type="match status" value="1"/>
</dbReference>
<dbReference type="PROSITE" id="PS51440">
    <property type="entry name" value="TIM_2"/>
    <property type="match status" value="1"/>
</dbReference>
<reference key="1">
    <citation type="journal article" date="2009" name="BMC Microbiol.">
        <title>The genome sequence of Geobacter metallireducens: features of metabolism, physiology and regulation common and dissimilar to Geobacter sulfurreducens.</title>
        <authorList>
            <person name="Aklujkar M."/>
            <person name="Krushkal J."/>
            <person name="DiBartolo G."/>
            <person name="Lapidus A."/>
            <person name="Land M.L."/>
            <person name="Lovley D.R."/>
        </authorList>
    </citation>
    <scope>NUCLEOTIDE SEQUENCE [LARGE SCALE GENOMIC DNA]</scope>
    <source>
        <strain>ATCC 53774 / DSM 7210 / GS-15</strain>
    </source>
</reference>
<evidence type="ECO:0000255" key="1">
    <source>
        <dbReference type="HAMAP-Rule" id="MF_00147"/>
    </source>
</evidence>
<accession>Q39U97</accession>
<keyword id="KW-0963">Cytoplasm</keyword>
<keyword id="KW-0312">Gluconeogenesis</keyword>
<keyword id="KW-0324">Glycolysis</keyword>
<keyword id="KW-0413">Isomerase</keyword>
<keyword id="KW-1185">Reference proteome</keyword>
<proteinExistence type="inferred from homology"/>
<feature type="chain" id="PRO_0000307472" description="Triosephosphate isomerase">
    <location>
        <begin position="1"/>
        <end position="251"/>
    </location>
</feature>
<feature type="active site" description="Electrophile" evidence="1">
    <location>
        <position position="95"/>
    </location>
</feature>
<feature type="active site" description="Proton acceptor" evidence="1">
    <location>
        <position position="167"/>
    </location>
</feature>
<feature type="binding site" evidence="1">
    <location>
        <begin position="9"/>
        <end position="11"/>
    </location>
    <ligand>
        <name>substrate</name>
    </ligand>
</feature>
<feature type="binding site" evidence="1">
    <location>
        <position position="173"/>
    </location>
    <ligand>
        <name>substrate</name>
    </ligand>
</feature>
<feature type="binding site" evidence="1">
    <location>
        <position position="213"/>
    </location>
    <ligand>
        <name>substrate</name>
    </ligand>
</feature>
<feature type="binding site" evidence="1">
    <location>
        <begin position="234"/>
        <end position="235"/>
    </location>
    <ligand>
        <name>substrate</name>
    </ligand>
</feature>